<comment type="function">
    <molecule>Capsid protein VP1</molecule>
    <text evidence="2 15">Forms an icosahedral capsid of pseudo T=3 symmetry with capsid proteins VP2 and VP3 (By similarity). The capsid is 300 Angstroms in diameter, composed of 60 copies of each capsid protein and enclosing the viral positive strand RNA genome (By similarity). Capsid protein VP1 mainly forms the vertices of the capsid (By similarity). Capsid protein VP1 interacts with host integrin ITGAV/ITGB6 to provide virion attachment to target host cells (Probable). This attachment induces virion internalization (By similarity). Tyrosine kinases are probably involved in the entry process (By similarity). After binding to its receptor, the capsid undergoes conformational changes (By similarity). Capsid protein VP1 N-terminus (that contains an amphipathic alpha-helix) and capsid protein VP4 are externalized (By similarity). Together, they shape a pore in the host membrane through which viral genome is translocated to host cell cytoplasm (By similarity).</text>
</comment>
<comment type="function">
    <molecule>Capsid protein VP2</molecule>
    <text evidence="2">Forms an icosahedral capsid of pseudo T=3 symmetry with capsid proteins VP2 and VP3 (By similarity). The capsid is 300 Angstroms in diameter, composed of 60 copies of each capsid protein and enclosing the viral positive strand RNA genome (By similarity).</text>
</comment>
<comment type="function">
    <molecule>Capsid protein VP3</molecule>
    <text evidence="2">Forms an icosahedral capsid of pseudo T=3 symmetry with capsid proteins VP2 and VP3 (By similarity). The capsid is 300 Angstroms in diameter, composed of 60 copies of each capsid protein and enclosing the viral positive strand RNA genome (By similarity).</text>
</comment>
<comment type="function">
    <molecule>Capsid protein VP4</molecule>
    <text evidence="2">Lies on the inner surface of the capsid shell (By similarity). After binding to the host receptor, the capsid undergoes conformational changes (By similarity). Capsid protein VP4 is released, Capsid protein VP1 N-terminus is externalized, and together, they shape a pore in the host membrane through which the viral genome is translocated into the host cell cytoplasm (By similarity).</text>
</comment>
<comment type="function">
    <molecule>Capsid protein VP0</molecule>
    <text evidence="2">Component of immature procapsids, which is cleaved into capsid proteins VP4 and VP2 after maturation (By similarity). Allows the capsid to remain inactive before the maturation step (By similarity).</text>
</comment>
<comment type="function">
    <molecule>Protease 2A</molecule>
    <text evidence="2 5">Cysteine protease that cleaves viral polyprotein and specific host proteins (By similarity). It is responsible for the autocatalytic cleavage between the P1 and P2 regions, which is the first cleavage occurring in the polyprotein (By similarity). Also cleaves the host translation initiation factor EIF4G1, in order to shut down the capped cellular mRNA translation (By similarity). Inhibits the host nucleus-cytoplasm protein and RNA trafficking by cleaving host members of the nuclear pores (By similarity). Counteracts stress granule formation probably by antagonizing its assembly or promoting its dissassembly (By similarity). Cleaves and inhibits host IFIH1/MDA5, thereby inhibiting the type-I IFN production and the establishment of the antiviral state (By similarity). Cleaves and inhibits host MAVS, thereby inhibiting the type-I IFN production and the establishment of the antiviral state (By similarity).</text>
</comment>
<comment type="function">
    <molecule>Protein 2B</molecule>
    <text evidence="2">Plays an essential role in the virus replication cycle by acting as a viroporin. Creates a pore in the host endoplasmic reticulum and as a consequence releases Ca2+ in the cytoplasm of infected cell. In turn, high levels of cytoplasmic calcium may trigger membrane trafficking and transport of viral ER-associated proteins to viroplasms, sites of viral genome replication.</text>
</comment>
<comment type="function">
    <molecule>Protein 2C</molecule>
    <text evidence="2">Induces and associates with structural rearrangements of intracellular membranes. Displays RNA-binding, nucleotide binding and NTPase activities. May play a role in virion morphogenesis and viral RNA encapsidation by interacting with the capsid protein VP3.</text>
</comment>
<comment type="function">
    <molecule>Protein 3AB</molecule>
    <text evidence="2">Localizes the viral replication complex to the surface of membranous vesicles. Together with protein 3CD binds the Cis-Active RNA Element (CRE) which is involved in RNA synthesis initiation. Acts as a cofactor to stimulate the activity of 3D polymerase, maybe through a nucleid acid chaperone activity.</text>
</comment>
<comment type="function">
    <molecule>Protein 3A</molecule>
    <text evidence="2 5">Localizes the viral replication complex to the surface of membranous vesicles (By similarity). It inhibits host cell endoplasmic reticulum-to-Golgi apparatus transport and causes the disassembly of the Golgi complex, possibly through GBF1 interaction (By similarity). This would result in depletion of MHC, trail receptors and IFN receptors at the host cell surface (By similarity). Plays an essential role in viral RNA replication by recruiting ACBD3 and PI4KB at the viral replication sites, thereby allowing the formation of the rearranged membranous structures where viral replication takes place (By similarity).</text>
</comment>
<comment type="function">
    <molecule>Viral protein genome-linked</molecule>
    <text evidence="2">Acts as a primer for viral RNA replication and remains covalently bound to viral genomic RNA. VPg is uridylylated prior to priming replication into VPg-pUpU. The oriI viral genomic sequence may act as a template for this. The VPg-pUpU is then used as primer on the genomic RNA poly(A) by the RNA-dependent RNA polymerase to replicate the viral genome. During genome replication, the VPg-RNA linkage is removed by the host TDP2, thereby accelerating replication. During the late stage of the replication cycle, host TDP2 is excluded from sites of viral RNA synthesis and encapsidation, allowing for the generation of progeny virions.</text>
</comment>
<comment type="function">
    <molecule>Protein 3CD</molecule>
    <text evidence="2">Involved in the viral replication complex and viral polypeptide maturation. It exhibits protease activity with a specificity and catalytic efficiency that is different from protease 3C. Protein 3CD lacks polymerase activity. Protein 3CD binds to the 5'UTR of the viral genome.</text>
</comment>
<comment type="function">
    <molecule>RNA-directed RNA polymerase</molecule>
    <text evidence="2">Replicates the viral genomic RNA on the surface of intracellular membranes. May form linear arrays of subunits that propagate along a strong head-to-tail interaction called interface-I. Covalently attaches UMP to a tyrosine of VPg, which is used to prime RNA synthesis. The positive stranded RNA genome is first replicated at virus induced membranous vesicles, creating a dsRNA genomic replication form. This dsRNA is then used as template to synthesize positive stranded RNA genomes. ss(+)RNA genomes are either translated, replicated or encapsidated.</text>
</comment>
<comment type="function">
    <molecule>Protease 3C</molecule>
    <text evidence="2 4">Major viral protease that mediates proteolytic processing of the polyprotein (By similarity). Cleaves host EIF5B, contributing to host translation shutoff (By similarity). Also cleaves host PABPC1, contributing to host translation shutoff (By similarity). Cleaves host NLRP1, triggers host N-glycine-mediated degradation of the autoinhibitory NLRP1 N-terminal fragment (By similarity).</text>
</comment>
<comment type="catalytic activity">
    <molecule>Protein 2C</molecule>
    <reaction evidence="2">
        <text>a ribonucleoside 5'-triphosphate + H2O = a ribonucleoside 5'-diphosphate + phosphate + H(+)</text>
        <dbReference type="Rhea" id="RHEA:23680"/>
        <dbReference type="ChEBI" id="CHEBI:15377"/>
        <dbReference type="ChEBI" id="CHEBI:15378"/>
        <dbReference type="ChEBI" id="CHEBI:43474"/>
        <dbReference type="ChEBI" id="CHEBI:57930"/>
        <dbReference type="ChEBI" id="CHEBI:61557"/>
        <dbReference type="EC" id="3.6.1.15"/>
    </reaction>
</comment>
<comment type="catalytic activity">
    <molecule>Protease 2A</molecule>
    <reaction evidence="2">
        <text>Selective cleavage of Tyr-|-Gly bond in the picornavirus polyprotein.</text>
        <dbReference type="EC" id="3.4.22.29"/>
    </reaction>
</comment>
<comment type="catalytic activity">
    <molecule>RNA-directed RNA polymerase</molecule>
    <reaction evidence="10">
        <text>RNA(n) + a ribonucleoside 5'-triphosphate = RNA(n+1) + diphosphate</text>
        <dbReference type="Rhea" id="RHEA:21248"/>
        <dbReference type="Rhea" id="RHEA-COMP:14527"/>
        <dbReference type="Rhea" id="RHEA-COMP:17342"/>
        <dbReference type="ChEBI" id="CHEBI:33019"/>
        <dbReference type="ChEBI" id="CHEBI:61557"/>
        <dbReference type="ChEBI" id="CHEBI:140395"/>
        <dbReference type="EC" id="2.7.7.48"/>
    </reaction>
</comment>
<comment type="catalytic activity">
    <molecule>Protease 3C</molecule>
    <reaction evidence="12">
        <text>Selective cleavage of Gln-|-Gly bond in the poliovirus polyprotein. In other picornavirus reactions Glu may be substituted for Gln, and Ser or Thr for Gly.</text>
        <dbReference type="EC" id="3.4.22.28"/>
    </reaction>
</comment>
<comment type="cofactor">
    <molecule>RNA-directed RNA polymerase</molecule>
    <cofactor evidence="2">
        <name>Mg(2+)</name>
        <dbReference type="ChEBI" id="CHEBI:18420"/>
    </cofactor>
    <text evidence="2 5">Binds 2 magnesium ions that constitute a dinuclear catalytic metal center (By similarity). The magnesium ions are not prebound but only present for catalysis (By similarity). Requires the presence of 3CDpro or 3CPro (By similarity).</text>
</comment>
<comment type="activity regulation">
    <molecule>RNA-directed RNA polymerase</molecule>
    <text evidence="2">Replication or transcription is subject to high level of random mutations by the nucleotide analog ribavirin.</text>
</comment>
<comment type="subunit">
    <molecule>Capsid protein VP0</molecule>
    <text evidence="2">Interacts with capsid protein VP1 and capsid protein VP3 to form heterotrimeric protomers.</text>
</comment>
<comment type="subunit">
    <molecule>Capsid protein VP1</molecule>
    <text evidence="2 13">Interacts with capsid protein VP0, and capsid protein VP3 to form heterotrimeric protomers (By similarity). Five protomers subsequently associate to form pentamers which serve as building blocks for the capsid (By similarity). Interacts with capsid protein VP2, capsid protein VP3 and capsid protein VP4 following cleavage of capsid protein VP0 (By similarity). Interacts with host integrin heterodimer ITGAV/ITGB6 (PubMed:15194773).</text>
</comment>
<comment type="subunit">
    <molecule>Capsid protein VP2</molecule>
    <text evidence="2">Interacts with capsid protein VP1 and capsid protein VP3 in the mature capsid.</text>
</comment>
<comment type="subunit">
    <molecule>Capsid protein VP3</molecule>
    <text evidence="2">Interacts with capsid protein VP0 and capsid protein VP1 to form heterotrimeric protomers (By similarity). Five protomers subsequently associate to form pentamers which serve as building blocks for the capsid (By similarity). Interacts with capsid protein VP4 in the mature capsid (By similarity). Interacts with protein 2C; this interaction may be important for virion morphogenesis (By similarity).</text>
</comment>
<comment type="subunit">
    <molecule>Capsid protein VP4</molecule>
    <text evidence="2">Interacts with capsid protein VP1 and capsid protein VP3.</text>
</comment>
<comment type="subunit">
    <molecule>Protease 2A</molecule>
    <text evidence="6">Homodimer.</text>
</comment>
<comment type="subunit">
    <molecule>Protein 2C</molecule>
    <text evidence="2">Homohexamer; forms a hexameric ring structure with 6-fold symmetry characteristic of AAA+ ATPases (By similarity). Interacts (via N-terminus) with host RTN3 (via reticulon domain); this interaction is important for viral replication (By similarity). Interacts with capsid protein VP3; this interaction may be important for virion morphogenesis (By similarity).</text>
</comment>
<comment type="subunit">
    <molecule>Protein 3AB</molecule>
    <text evidence="2">Interacts with protein 3CD.</text>
</comment>
<comment type="subunit">
    <molecule>Protein 3A</molecule>
    <text evidence="2 5">Homodimer (By similarity). Interacts with host GBF1 (By similarity). Interacts (via GOLD domain) with host ACBD3 (via GOLD domain); this interaction allows the formation of a viral protein 3A/ACBD3 heterotetramer with a 2:2 stoichiometry, which will stimulate the recruitment of host PI4KB in order to synthesize PI4P at the viral RNA replication sites (By similarity).</text>
</comment>
<comment type="subunit">
    <molecule>Viral protein genome-linked</molecule>
    <text evidence="2">Interacts with RNA-directed RNA polymerase.</text>
</comment>
<comment type="subunit">
    <molecule>Protein 3CD</molecule>
    <text evidence="2">Interacts with protein 3AB and with RNA-directed RNA polymerase.</text>
</comment>
<comment type="subunit">
    <molecule>RNA-directed RNA polymerase</molecule>
    <text evidence="2">Interacts with Viral protein genome-linked and with protein 3CD.</text>
</comment>
<comment type="subcellular location">
    <molecule>Capsid protein VP0</molecule>
    <subcellularLocation>
        <location>Virion</location>
    </subcellularLocation>
    <subcellularLocation>
        <location evidence="14">Host cytoplasm</location>
    </subcellularLocation>
</comment>
<comment type="subcellular location">
    <molecule>Capsid protein VP4</molecule>
    <subcellularLocation>
        <location>Virion</location>
    </subcellularLocation>
</comment>
<comment type="subcellular location">
    <molecule>Capsid protein VP2</molecule>
    <subcellularLocation>
        <location evidence="2">Virion</location>
    </subcellularLocation>
    <subcellularLocation>
        <location evidence="14">Host cytoplasm</location>
    </subcellularLocation>
</comment>
<comment type="subcellular location">
    <molecule>Capsid protein VP3</molecule>
    <subcellularLocation>
        <location evidence="2">Virion</location>
    </subcellularLocation>
    <subcellularLocation>
        <location evidence="14">Host cytoplasm</location>
    </subcellularLocation>
</comment>
<comment type="subcellular location">
    <molecule>Capsid protein VP1</molecule>
    <subcellularLocation>
        <location evidence="2">Virion</location>
    </subcellularLocation>
    <subcellularLocation>
        <location evidence="14">Host cytoplasm</location>
    </subcellularLocation>
</comment>
<comment type="subcellular location">
    <molecule>Protein 2B</molecule>
    <subcellularLocation>
        <location evidence="14">Host cytoplasmic vesicle membrane</location>
        <topology evidence="14">Peripheral membrane protein</topology>
        <orientation evidence="14">Cytoplasmic side</orientation>
    </subcellularLocation>
    <text>Probably localizes to the surface of intracellular membrane vesicles that are induced after virus infection as the site for viral RNA replication. These vesicles are derived from the endoplasmic reticulum.</text>
</comment>
<comment type="subcellular location">
    <molecule>Protein 2C</molecule>
    <subcellularLocation>
        <location evidence="14">Host cytoplasmic vesicle membrane</location>
        <topology evidence="14">Peripheral membrane protein</topology>
        <orientation evidence="14">Cytoplasmic side</orientation>
    </subcellularLocation>
    <text>Probably localizes to the surface of intracellular membrane vesicles that are induced after virus infection as the site for viral RNA replication. These vesicles are derived from the endoplasmic reticulum.</text>
</comment>
<comment type="subcellular location">
    <molecule>Protein 3A</molecule>
    <subcellularLocation>
        <location evidence="14">Host cytoplasmic vesicle membrane</location>
        <topology evidence="14">Peripheral membrane protein</topology>
        <orientation evidence="14">Cytoplasmic side</orientation>
    </subcellularLocation>
    <text>Probably localizes to the surface of intracellular membrane vesicles that are induced after virus infection as the site for viral RNA replication. These vesicles are derived from the endoplasmic reticulum.</text>
</comment>
<comment type="subcellular location">
    <molecule>Protein 3AB</molecule>
    <subcellularLocation>
        <location evidence="14">Host cytoplasmic vesicle membrane</location>
        <topology evidence="14">Peripheral membrane protein</topology>
        <orientation evidence="14">Cytoplasmic side</orientation>
    </subcellularLocation>
    <text>Probably localizes to the surface of intracellular membrane vesicles that are induced after virus infection as the site for viral RNA replication. These vesicles are derived from the endoplasmic reticulum.</text>
</comment>
<comment type="subcellular location">
    <molecule>Viral protein genome-linked</molecule>
    <subcellularLocation>
        <location evidence="2">Virion</location>
    </subcellularLocation>
    <subcellularLocation>
        <location evidence="7">Host cytoplasm</location>
    </subcellularLocation>
</comment>
<comment type="subcellular location">
    <molecule>Protease 3C</molecule>
    <subcellularLocation>
        <location>Host cytoplasm</location>
    </subcellularLocation>
</comment>
<comment type="subcellular location">
    <molecule>Protein 3CD</molecule>
    <subcellularLocation>
        <location evidence="2">Host nucleus</location>
    </subcellularLocation>
    <subcellularLocation>
        <location evidence="2">Host cytoplasm</location>
    </subcellularLocation>
    <subcellularLocation>
        <location evidence="14">Host cytoplasmic vesicle membrane</location>
        <topology evidence="14">Peripheral membrane protein</topology>
        <orientation evidence="14">Cytoplasmic side</orientation>
    </subcellularLocation>
    <text>Probably localizes to the surface of intracellular membrane vesicles that are induced after virus infection as the site for viral RNA replication. These vesicles are derived from the endoplasmic reticulum.</text>
</comment>
<comment type="subcellular location">
    <molecule>RNA-directed RNA polymerase</molecule>
    <subcellularLocation>
        <location evidence="14">Host cytoplasmic vesicle membrane</location>
        <topology evidence="14">Peripheral membrane protein</topology>
        <orientation evidence="14">Cytoplasmic side</orientation>
    </subcellularLocation>
    <text>Probably localizes to the surface of intracellular membrane vesicles that are induced after virus infection as the site for viral RNA replication. These vesicles are derived from the endoplasmic reticulum.</text>
</comment>
<comment type="domain">
    <molecule>Protein 2C</molecule>
    <text evidence="1 2">The N-terminus has membrane-binding (By similarity). The N-terminus also displays RNA-binding properties (By similarity). The N-terminus is involved in oligomerization (By similarity). The central part contains an ATPase domain and a degenerate C4-type zinc-finger with only 3 cysteines (By similarity). The C-terminus is involved in RNA-binding (By similarity). The extreme C-terminus contains a region involved in oligomerization (By similarity).</text>
</comment>
<comment type="PTM">
    <molecule>Genome polyprotein</molecule>
    <text evidence="2">Specific enzymatic cleavages in vivo by the viral proteases yield processing intermediates and the mature proteins.</text>
</comment>
<comment type="PTM">
    <molecule>Capsid protein VP0</molecule>
    <text evidence="2">Myristoylation is required for the formation of pentamers during virus assembly. Further assembly of 12 pentamers and a molecule of genomic RNA generates the provirion.</text>
</comment>
<comment type="PTM">
    <molecule>Capsid protein VP0</molecule>
    <text evidence="2">During virion maturation, immature virions are rendered infectious following cleavage of VP0 into VP4 and VP2. This maturation seems to be an autocatalytic event triggered by the presence of RNA in the capsid and it is followed by a conformational change infectious virion.</text>
</comment>
<comment type="PTM">
    <molecule>Capsid protein VP4</molecule>
    <text evidence="2">Myristoylation is required during RNA encapsidation and formation of the mature virus particle.</text>
</comment>
<comment type="PTM">
    <molecule>Viral protein genome-linked</molecule>
    <text evidence="2">VPg is uridylylated by the polymerase into VPg-pUpU. This acts as a nucleotide-peptide primer for the genomic RNA replication.</text>
</comment>
<comment type="similarity">
    <text evidence="14">Belongs to the picornaviruses polyprotein family.</text>
</comment>
<comment type="online information" name="Virus Particle ExploreR db">
    <link uri="https://viperdb.org/Info_Page.php?VDB=1d4m"/>
    <text>Icosahedral capsid structure</text>
</comment>
<sequence>MGAQVSTQKTGAHETSLSAAGNSIIHYTNINYYKDAASNSANRQDFTQDPSKFTEPVKDVMIKSLPALNSPTVEECGYSDRVRSITLGNSTITTQECANVVVGYGRWPTYLRDDEATAEDQPTQPDVATCRFYTLDSIKWEKGSVGWWWKFPEALSDMGLFGQNMQYHYLGRAGYTIHLQCNASKFHQGCLLVVCVPEAEMGGAVVGQAFSATAMANGDKAYEFTSATQSDQTKVQTAIHNAGMGVGVGNLTIYPHQWINLRTNNSATIVMPYINSVPMDNMFRHYNFTLMVIPFVKLDYADTASTYVPITVTVAPMCAEYNGLRLAQAQGLPTMNTPGSTQFLTSDDFQSPCALPQFDVTPSMNIPGEVKNLMEIAEVDSVVPVNNVQDTTDQMEMFRIPVTINAPLQQQVFGLRLQPGLDSVFKHTLLGEILNYYAHWSGSMKLTFVFCGSAMATGKFLIAYSPPGANPPKTRKDAMLGTHIIWDIGLQSSCVLCVPWISQTHYRLVQQDEYTSAGYVTCWYQTGMIVPPGTPNSSSIMCFASACNDFSVRMLRDTPFISQDNKLQGDVEEAIERARCTVADTMRTGPSNSASVPALTAVETGHTSQVTPSDTMQTRHVKNYHSRSESTVENFLGRSACVYMEEYKTTDKHVNKKFVAWPINTKQMVQMRRKLEMFTYLRFDMEVTFVITSRQDPGTTLAQDMPVLTRQIMYVPPGGPIPAKVDDYAWQTSTNPSIFWTEGNAPARMSIPFISIGNAYSNFYDGWSNFDQRGSYGYNTLNNLGHIYVRHVSGSSPHPITSTIRVYFKPKHTRAWVPRPPRLCQYKKAFSVDFTPTPITDTRKDINTVTTVAQSRRRGDMSTLNTHGAFGQQSGAVYVGNYRVINRHLATHTDWQNCVWEDYNRDLLVSTTTAHGCDVIARCQCTTGVYFCASKNKHYPVSFEGPGLVEVQESEYYPKRYQSHVLLAAGFSEPGDCGGILRCEHGVIGIVTMGGEGVVGFADVRDLLWLEDDAMEQGVKDYVEQLGNAFGSGFTNQICEQVNLLKESLVGQDSILEKSLKALVKIISALVIVVRNHDDLITVTAILALIGCTSSPWRWLKQKVSQYYGIPMAERQNDSWLKKFTEMTNACKRMEWIAIKIQKFIEWLKVKILPEVREKHEFLNRLKQLPLLESQIATIEQSAPSQSDQEQLFSNVQYFAHYCRKYAPLYAAEAKRVFSLEKKMSNYIQFKSKCRIEPVCLLLHGSPGAGKSVATNLIGRSLAEKLNSSVYSLPPDPDHFDGYKQQAVVIMDDLCQNPDGKDVSLFCQMVSSVDFVPPMAALEEKGILFTSPFVLASTNAGSINAPTVSDSRALARRFHFDMNIEVISMYSQNGKINMPMSVKTCDEECCPVNFKKCCPLVCGKAIQFIDRRTQVRYSLDMLVTEMFREYNHRHSVGATLEALFQGPPIYREIKISVAPETPPPPVIADLLKSVDSEDVREYCKEKGWLIPEVNSTLQIEKYVSRAFICLQAITTFVSVAGIIYIIYKLFAGFQGAYTGIPNQKPKVPTLRQAKVQGPAFEFAVAMMKRNSSTVKTEYGEFTMLGIYDRWAVLPRHAKPGPTILMNDQEVGVMDAKELVDKDGTNLELTLLKLNRNEKFRDIRGFLAKEEMEVNEAVLAINTSKFPNMYIPVGQVTDYGFLNLGGTPTKRMLMYNFPTRAGQCGGVLMSTGKVLGIHVGGNGHQGFSAALLKHYFNDEQGEIEFIESSKDAGFPIINTPSKTKLEPSVFHQVFEGVKEPAVLRNGDPRLKANFEEAIFSKYIGNVNTHVDEYMLEAVDHYAGQLATLDISTEPMKLEDAVYGTEGLEALDLTTSAGYPYVALGIKKRDILSKKTRDLTKLKECMDKYGLNLPMITYVKDQLRSAEKVAKGKSRLIEASSLNDSVAMRQTFGNLYKTFHLNPGIVTGSAVGCDPDLFWSKIPVMLNGHLIAFDYSGYDASLSPVWFACLKLLLEKLGYSHKETNYIDYLCNSHHLYRDKHYFVRGGMPSGCSGTSIFNSMINNIIIRTLMLKVYKGIDLDQFRMIAYGDDVIASYPWPIDASLLAEAGKDYGLIMTPADKGECFNEVTWTNVTFLKRYFRADEQYPFLVHPVMPMKDIHESIRWTKDPKNTQDHVRSLCLLAWHNGEHEYEEFIRKIRSVPVGRCLTLPAFSTLRRKWLDSF</sequence>
<name>POLG_CXA9</name>
<feature type="initiator methionine" description="Removed; by host" evidence="2">
    <location>
        <position position="1"/>
    </location>
</feature>
<feature type="chain" id="PRO_0000426164" description="Genome polyprotein">
    <location>
        <begin position="2"/>
        <end position="2201"/>
    </location>
</feature>
<feature type="chain" id="PRO_0000426165" description="P1">
    <location>
        <begin position="2"/>
        <end position="867"/>
    </location>
</feature>
<feature type="chain" id="PRO_0000426166" description="Capsid protein VP0">
    <location>
        <begin position="2"/>
        <end position="330"/>
    </location>
</feature>
<feature type="chain" id="PRO_0000426167" description="Capsid protein VP4">
    <location>
        <begin position="2"/>
        <end position="69"/>
    </location>
</feature>
<feature type="chain" id="PRO_0000426168" description="Capsid protein VP2">
    <location>
        <begin position="70"/>
        <end position="330"/>
    </location>
</feature>
<feature type="chain" id="PRO_0000426169" description="Capsid protein VP3">
    <location>
        <begin position="331"/>
        <end position="568"/>
    </location>
</feature>
<feature type="chain" id="PRO_0000426170" description="Capsid protein VP1">
    <location>
        <begin position="569"/>
        <end position="867"/>
    </location>
</feature>
<feature type="chain" id="PRO_0000426171" description="P2">
    <location>
        <begin position="868"/>
        <end position="1445"/>
    </location>
</feature>
<feature type="chain" id="PRO_0000426172" description="Protease 2A">
    <location>
        <begin position="868"/>
        <end position="1017"/>
    </location>
</feature>
<feature type="chain" id="PRO_0000039508" description="Protein 2B">
    <location>
        <begin position="1018"/>
        <end position="1116"/>
    </location>
</feature>
<feature type="chain" id="PRO_0000039509" description="Protein 2C">
    <location>
        <begin position="1117"/>
        <end position="1445"/>
    </location>
</feature>
<feature type="chain" id="PRO_0000426173" description="P3">
    <location>
        <begin position="1446"/>
        <end position="2201"/>
    </location>
</feature>
<feature type="chain" id="PRO_0000426174" description="Protein 3AB">
    <location>
        <begin position="1446"/>
        <end position="1556"/>
    </location>
</feature>
<feature type="chain" id="PRO_0000039510" description="Protein 3A">
    <location>
        <begin position="1446"/>
        <end position="1534"/>
    </location>
</feature>
<feature type="chain" id="PRO_0000426175" description="Viral protein genome-linked">
    <location>
        <begin position="1535"/>
        <end position="1556"/>
    </location>
</feature>
<feature type="chain" id="PRO_0000426176" description="Protein 3CD">
    <location>
        <begin position="1557"/>
        <end position="2201"/>
    </location>
</feature>
<feature type="chain" id="PRO_0000426177" description="Protease 3C">
    <location>
        <begin position="1557"/>
        <end position="1739"/>
    </location>
</feature>
<feature type="chain" id="PRO_0000426178" description="RNA-directed RNA polymerase">
    <location>
        <begin position="1740"/>
        <end position="2201"/>
    </location>
</feature>
<feature type="topological domain" description="Cytoplasmic" evidence="9">
    <location>
        <begin position="2"/>
        <end position="1511"/>
    </location>
</feature>
<feature type="intramembrane region" evidence="9">
    <location>
        <begin position="1512"/>
        <end position="1527"/>
    </location>
</feature>
<feature type="topological domain" description="Cytoplasmic" evidence="9">
    <location>
        <begin position="1528"/>
        <end position="2201"/>
    </location>
</feature>
<feature type="domain" description="SF3 helicase" evidence="11">
    <location>
        <begin position="1221"/>
        <end position="1377"/>
    </location>
</feature>
<feature type="domain" description="Peptidase C3" evidence="12">
    <location>
        <begin position="1557"/>
        <end position="1735"/>
    </location>
</feature>
<feature type="domain" description="RdRp catalytic" evidence="10">
    <location>
        <begin position="1966"/>
        <end position="2082"/>
    </location>
</feature>
<feature type="zinc finger region" description="C4-type; degenerate" evidence="1">
    <location>
        <begin position="1385"/>
        <end position="1402"/>
    </location>
</feature>
<feature type="region of interest" description="Amphipathic alpha-helix" evidence="9">
    <location>
        <begin position="566"/>
        <end position="582"/>
    </location>
</feature>
<feature type="region of interest" description="Oligomerization" evidence="2">
    <location>
        <begin position="1117"/>
        <end position="1255"/>
    </location>
</feature>
<feature type="region of interest" description="Membrane-binding" evidence="2">
    <location>
        <begin position="1117"/>
        <end position="1189"/>
    </location>
</feature>
<feature type="region of interest" description="RNA-binding" evidence="2">
    <location>
        <begin position="1138"/>
        <end position="1142"/>
    </location>
</feature>
<feature type="region of interest" description="RNA-binding" evidence="2">
    <location>
        <begin position="1429"/>
        <end position="1436"/>
    </location>
</feature>
<feature type="region of interest" description="Oligomerization" evidence="2">
    <location>
        <begin position="1440"/>
        <end position="1445"/>
    </location>
</feature>
<feature type="short sequence motif" description="Cell attachment site">
    <location>
        <begin position="858"/>
        <end position="860"/>
    </location>
</feature>
<feature type="active site" description="For protease 2A activity" evidence="2">
    <location>
        <position position="888"/>
    </location>
</feature>
<feature type="active site" description="For protease 2A activity" evidence="2">
    <location>
        <position position="906"/>
    </location>
</feature>
<feature type="active site" description="For protease 2A activity" evidence="2">
    <location>
        <position position="977"/>
    </location>
</feature>
<feature type="active site" description="For protease 3C activity" evidence="12">
    <location>
        <position position="1596"/>
    </location>
</feature>
<feature type="active site" description="For protease 3C activity" evidence="12">
    <location>
        <position position="1627"/>
    </location>
</feature>
<feature type="active site" description="For protease 3C activity" evidence="12">
    <location>
        <position position="1703"/>
    </location>
</feature>
<feature type="binding site" evidence="8">
    <location>
        <position position="923"/>
    </location>
    <ligand>
        <name>Zn(2+)</name>
        <dbReference type="ChEBI" id="CHEBI:29105"/>
        <label>1</label>
        <note>structural</note>
    </ligand>
</feature>
<feature type="binding site" evidence="8">
    <location>
        <position position="925"/>
    </location>
    <ligand>
        <name>Zn(2+)</name>
        <dbReference type="ChEBI" id="CHEBI:29105"/>
        <label>1</label>
        <note>structural</note>
    </ligand>
</feature>
<feature type="binding site" evidence="8">
    <location>
        <position position="983"/>
    </location>
    <ligand>
        <name>Zn(2+)</name>
        <dbReference type="ChEBI" id="CHEBI:29105"/>
        <label>1</label>
        <note>structural</note>
    </ligand>
</feature>
<feature type="binding site" evidence="8">
    <location>
        <position position="985"/>
    </location>
    <ligand>
        <name>Zn(2+)</name>
        <dbReference type="ChEBI" id="CHEBI:29105"/>
        <label>1</label>
        <note>structural</note>
    </ligand>
</feature>
<feature type="binding site" evidence="1">
    <location>
        <position position="1385"/>
    </location>
    <ligand>
        <name>Zn(2+)</name>
        <dbReference type="ChEBI" id="CHEBI:29105"/>
        <label>2</label>
    </ligand>
</feature>
<feature type="binding site" evidence="1">
    <location>
        <position position="1397"/>
    </location>
    <ligand>
        <name>Zn(2+)</name>
        <dbReference type="ChEBI" id="CHEBI:29105"/>
        <label>2</label>
    </ligand>
</feature>
<feature type="binding site" evidence="1">
    <location>
        <position position="1402"/>
    </location>
    <ligand>
        <name>Zn(2+)</name>
        <dbReference type="ChEBI" id="CHEBI:29105"/>
        <label>2</label>
    </ligand>
</feature>
<feature type="binding site" evidence="2">
    <location>
        <position position="1972"/>
    </location>
    <ligand>
        <name>Mg(2+)</name>
        <dbReference type="ChEBI" id="CHEBI:18420"/>
        <label>1</label>
        <note>catalytic; for RdRp activity</note>
    </ligand>
</feature>
<feature type="binding site" evidence="2">
    <location>
        <position position="1972"/>
    </location>
    <ligand>
        <name>Mg(2+)</name>
        <dbReference type="ChEBI" id="CHEBI:18420"/>
        <label>2</label>
        <note>catalytic; for RdRp activity</note>
    </ligand>
</feature>
<feature type="binding site" evidence="2">
    <location>
        <position position="2068"/>
    </location>
    <ligand>
        <name>Mg(2+)</name>
        <dbReference type="ChEBI" id="CHEBI:18420"/>
        <label>1</label>
        <note>catalytic; for RdRp activity</note>
    </ligand>
</feature>
<feature type="binding site" evidence="2">
    <location>
        <position position="2068"/>
    </location>
    <ligand>
        <name>Mg(2+)</name>
        <dbReference type="ChEBI" id="CHEBI:18420"/>
        <label>2</label>
        <note>catalytic; for RdRp activity</note>
    </ligand>
</feature>
<feature type="site" description="Cleavage; by autolysis" evidence="2">
    <location>
        <begin position="69"/>
        <end position="70"/>
    </location>
</feature>
<feature type="site" description="Cleavage; by protease 3C" evidence="3">
    <location>
        <begin position="330"/>
        <end position="331"/>
    </location>
</feature>
<feature type="site" description="Cleavage; by autolysis" evidence="3">
    <location>
        <begin position="867"/>
        <end position="868"/>
    </location>
</feature>
<feature type="site" description="Cleavage; by protease 3C" evidence="3">
    <location>
        <begin position="1017"/>
        <end position="1018"/>
    </location>
</feature>
<feature type="site" description="Cleavage; by protease 3C" evidence="3">
    <location>
        <begin position="1116"/>
        <end position="1117"/>
    </location>
</feature>
<feature type="site" description="Involved in the interaction with host RTN3" evidence="7">
    <location>
        <position position="1141"/>
    </location>
</feature>
<feature type="site" description="Cleavage; by protease 3C" evidence="3">
    <location>
        <begin position="1445"/>
        <end position="1446"/>
    </location>
</feature>
<feature type="site" description="Cleavage; by protease 3C" evidence="3">
    <location>
        <begin position="1534"/>
        <end position="1535"/>
    </location>
</feature>
<feature type="site" description="Cleavage; by protease 3C" evidence="3">
    <location>
        <begin position="1556"/>
        <end position="1557"/>
    </location>
</feature>
<feature type="site" description="Cleavage; by protease 3C" evidence="3">
    <location>
        <begin position="1739"/>
        <end position="1740"/>
    </location>
</feature>
<feature type="modified residue" description="O-(5'-phospho-RNA)-tyrosine" evidence="2">
    <location>
        <position position="1537"/>
    </location>
</feature>
<feature type="lipid moiety-binding region" description="N-myristoyl glycine; by host" evidence="2">
    <location>
        <position position="2"/>
    </location>
</feature>
<feature type="strand" evidence="16">
    <location>
        <begin position="3"/>
        <end position="7"/>
    </location>
</feature>
<feature type="strand" evidence="16">
    <location>
        <begin position="26"/>
        <end position="29"/>
    </location>
</feature>
<feature type="strand" evidence="16">
    <location>
        <begin position="33"/>
        <end position="35"/>
    </location>
</feature>
<feature type="helix" evidence="16">
    <location>
        <begin position="36"/>
        <end position="38"/>
    </location>
</feature>
<feature type="helix" evidence="16">
    <location>
        <begin position="51"/>
        <end position="54"/>
    </location>
</feature>
<feature type="strand" evidence="16">
    <location>
        <begin position="57"/>
        <end position="59"/>
    </location>
</feature>
<feature type="strand" evidence="16">
    <location>
        <begin position="63"/>
        <end position="65"/>
    </location>
</feature>
<feature type="strand" evidence="16">
    <location>
        <begin position="83"/>
        <end position="87"/>
    </location>
</feature>
<feature type="strand" evidence="16">
    <location>
        <begin position="90"/>
        <end position="96"/>
    </location>
</feature>
<feature type="turn" evidence="16">
    <location>
        <begin position="113"/>
        <end position="115"/>
    </location>
</feature>
<feature type="helix" evidence="16">
    <location>
        <begin position="126"/>
        <end position="128"/>
    </location>
</feature>
<feature type="strand" evidence="16">
    <location>
        <begin position="138"/>
        <end position="140"/>
    </location>
</feature>
<feature type="strand" evidence="16">
    <location>
        <begin position="147"/>
        <end position="151"/>
    </location>
</feature>
<feature type="helix" evidence="16">
    <location>
        <begin position="153"/>
        <end position="155"/>
    </location>
</feature>
<feature type="helix" evidence="16">
    <location>
        <begin position="159"/>
        <end position="167"/>
    </location>
</feature>
<feature type="strand" evidence="16">
    <location>
        <begin position="168"/>
        <end position="180"/>
    </location>
</feature>
<feature type="strand" evidence="16">
    <location>
        <begin position="188"/>
        <end position="197"/>
    </location>
</feature>
<feature type="strand" evidence="16">
    <location>
        <begin position="203"/>
        <end position="205"/>
    </location>
</feature>
<feature type="helix" evidence="16">
    <location>
        <begin position="212"/>
        <end position="214"/>
    </location>
</feature>
<feature type="strand" evidence="16">
    <location>
        <begin position="225"/>
        <end position="227"/>
    </location>
</feature>
<feature type="helix" evidence="16">
    <location>
        <begin position="239"/>
        <end position="241"/>
    </location>
</feature>
<feature type="turn" evidence="16">
    <location>
        <begin position="242"/>
        <end position="245"/>
    </location>
</feature>
<feature type="helix" evidence="16">
    <location>
        <begin position="248"/>
        <end position="253"/>
    </location>
</feature>
<feature type="strand" evidence="16">
    <location>
        <begin position="254"/>
        <end position="260"/>
    </location>
</feature>
<feature type="turn" evidence="16">
    <location>
        <begin position="261"/>
        <end position="263"/>
    </location>
</feature>
<feature type="strand" evidence="16">
    <location>
        <begin position="265"/>
        <end position="271"/>
    </location>
</feature>
<feature type="strand" evidence="16">
    <location>
        <begin position="276"/>
        <end position="280"/>
    </location>
</feature>
<feature type="turn" evidence="16">
    <location>
        <begin position="282"/>
        <end position="284"/>
    </location>
</feature>
<feature type="strand" evidence="16">
    <location>
        <begin position="288"/>
        <end position="299"/>
    </location>
</feature>
<feature type="strand" evidence="16">
    <location>
        <begin position="308"/>
        <end position="324"/>
    </location>
</feature>
<feature type="turn" evidence="16">
    <location>
        <begin position="338"/>
        <end position="341"/>
    </location>
</feature>
<feature type="strand" evidence="16">
    <location>
        <begin position="353"/>
        <end position="355"/>
    </location>
</feature>
<feature type="helix" evidence="16">
    <location>
        <begin position="374"/>
        <end position="377"/>
    </location>
</feature>
<feature type="helix" evidence="16">
    <location>
        <begin position="394"/>
        <end position="398"/>
    </location>
</feature>
<feature type="strand" evidence="16">
    <location>
        <begin position="400"/>
        <end position="404"/>
    </location>
</feature>
<feature type="strand" evidence="16">
    <location>
        <begin position="411"/>
        <end position="416"/>
    </location>
</feature>
<feature type="turn" evidence="16">
    <location>
        <begin position="419"/>
        <end position="421"/>
    </location>
</feature>
<feature type="turn" evidence="16">
    <location>
        <begin position="423"/>
        <end position="427"/>
    </location>
</feature>
<feature type="helix" evidence="16">
    <location>
        <begin position="429"/>
        <end position="434"/>
    </location>
</feature>
<feature type="strand" evidence="16">
    <location>
        <begin position="437"/>
        <end position="442"/>
    </location>
</feature>
<feature type="strand" evidence="16">
    <location>
        <begin position="444"/>
        <end position="450"/>
    </location>
</feature>
<feature type="strand" evidence="16">
    <location>
        <begin position="459"/>
        <end position="465"/>
    </location>
</feature>
<feature type="helix" evidence="16">
    <location>
        <begin position="475"/>
        <end position="478"/>
    </location>
</feature>
<feature type="strand" evidence="16">
    <location>
        <begin position="481"/>
        <end position="487"/>
    </location>
</feature>
<feature type="strand" evidence="16">
    <location>
        <begin position="493"/>
        <end position="498"/>
    </location>
</feature>
<feature type="strand" evidence="16">
    <location>
        <begin position="503"/>
        <end position="505"/>
    </location>
</feature>
<feature type="strand" evidence="16">
    <location>
        <begin position="507"/>
        <end position="510"/>
    </location>
</feature>
<feature type="strand" evidence="16">
    <location>
        <begin position="519"/>
        <end position="526"/>
    </location>
</feature>
<feature type="strand" evidence="16">
    <location>
        <begin position="536"/>
        <end position="546"/>
    </location>
</feature>
<feature type="strand" evidence="16">
    <location>
        <begin position="551"/>
        <end position="555"/>
    </location>
</feature>
<feature type="helix" evidence="16">
    <location>
        <begin position="602"/>
        <end position="604"/>
    </location>
</feature>
<feature type="helix" evidence="16">
    <location>
        <begin position="612"/>
        <end position="615"/>
    </location>
</feature>
<feature type="helix" evidence="16">
    <location>
        <begin position="628"/>
        <end position="630"/>
    </location>
</feature>
<feature type="helix" evidence="16">
    <location>
        <begin position="632"/>
        <end position="636"/>
    </location>
</feature>
<feature type="strand" evidence="16">
    <location>
        <begin position="640"/>
        <end position="650"/>
    </location>
</feature>
<feature type="helix" evidence="16">
    <location>
        <begin position="654"/>
        <end position="657"/>
    </location>
</feature>
<feature type="strand" evidence="16">
    <location>
        <begin position="658"/>
        <end position="662"/>
    </location>
</feature>
<feature type="strand" evidence="16">
    <location>
        <begin position="665"/>
        <end position="668"/>
    </location>
</feature>
<feature type="helix" evidence="16">
    <location>
        <begin position="669"/>
        <end position="675"/>
    </location>
</feature>
<feature type="strand" evidence="16">
    <location>
        <begin position="678"/>
        <end position="695"/>
    </location>
</feature>
<feature type="strand" evidence="16">
    <location>
        <begin position="709"/>
        <end position="715"/>
    </location>
</feature>
<feature type="helix" evidence="16">
    <location>
        <begin position="728"/>
        <end position="731"/>
    </location>
</feature>
<feature type="strand" evidence="16">
    <location>
        <begin position="733"/>
        <end position="735"/>
    </location>
</feature>
<feature type="strand" evidence="16">
    <location>
        <begin position="737"/>
        <end position="741"/>
    </location>
</feature>
<feature type="strand" evidence="16">
    <location>
        <begin position="748"/>
        <end position="751"/>
    </location>
</feature>
<feature type="strand" evidence="16">
    <location>
        <begin position="756"/>
        <end position="762"/>
    </location>
</feature>
<feature type="strand" evidence="16">
    <location>
        <begin position="766"/>
        <end position="769"/>
    </location>
</feature>
<feature type="turn" evidence="16">
    <location>
        <begin position="770"/>
        <end position="772"/>
    </location>
</feature>
<feature type="strand" evidence="16">
    <location>
        <begin position="773"/>
        <end position="777"/>
    </location>
</feature>
<feature type="helix" evidence="16">
    <location>
        <begin position="778"/>
        <end position="781"/>
    </location>
</feature>
<feature type="strand" evidence="16">
    <location>
        <begin position="786"/>
        <end position="793"/>
    </location>
</feature>
<feature type="strand" evidence="16">
    <location>
        <begin position="800"/>
        <end position="818"/>
    </location>
</feature>
<feature type="strand" evidence="16">
    <location>
        <begin position="843"/>
        <end position="845"/>
    </location>
</feature>
<keyword id="KW-0002">3D-structure</keyword>
<keyword id="KW-1072">Activation of host autophagy by virus</keyword>
<keyword id="KW-0067">ATP-binding</keyword>
<keyword id="KW-0068">Autocatalytic cleavage</keyword>
<keyword id="KW-0167">Capsid protein</keyword>
<keyword id="KW-0191">Covalent protein-RNA linkage</keyword>
<keyword id="KW-0235">DNA replication</keyword>
<keyword id="KW-1262">Eukaryotic host gene expression shutoff by virus</keyword>
<keyword id="KW-1193">Eukaryotic host translation shutoff by virus</keyword>
<keyword id="KW-0347">Helicase</keyword>
<keyword id="KW-1035">Host cytoplasm</keyword>
<keyword id="KW-1036">Host cytoplasmic vesicle</keyword>
<keyword id="KW-1190">Host gene expression shutoff by virus</keyword>
<keyword id="KW-1043">Host membrane</keyword>
<keyword id="KW-1192">Host mRNA suppression by virus</keyword>
<keyword id="KW-1048">Host nucleus</keyword>
<keyword id="KW-0945">Host-virus interaction</keyword>
<keyword id="KW-0378">Hydrolase</keyword>
<keyword id="KW-1090">Inhibition of host innate immune response by virus</keyword>
<keyword id="KW-1099">Inhibition of host mRNA nuclear export by virus</keyword>
<keyword id="KW-1088">Inhibition of host RIG-I by virus</keyword>
<keyword id="KW-1113">Inhibition of host RLR pathway by virus</keyword>
<keyword id="KW-0407">Ion channel</keyword>
<keyword id="KW-0406">Ion transport</keyword>
<keyword id="KW-0449">Lipoprotein</keyword>
<keyword id="KW-0460">Magnesium</keyword>
<keyword id="KW-0472">Membrane</keyword>
<keyword id="KW-0479">Metal-binding</keyword>
<keyword id="KW-0519">Myristate</keyword>
<keyword id="KW-0547">Nucleotide-binding</keyword>
<keyword id="KW-0548">Nucleotidyltransferase</keyword>
<keyword id="KW-0597">Phosphoprotein</keyword>
<keyword id="KW-1172">Pore-mediated penetration of viral genome into host cell</keyword>
<keyword id="KW-0645">Protease</keyword>
<keyword id="KW-0677">Repeat</keyword>
<keyword id="KW-0694">RNA-binding</keyword>
<keyword id="KW-0696">RNA-directed RNA polymerase</keyword>
<keyword id="KW-1143">T=pseudo3 icosahedral capsid protein</keyword>
<keyword id="KW-0788">Thiol protease</keyword>
<keyword id="KW-0808">Transferase</keyword>
<keyword id="KW-0813">Transport</keyword>
<keyword id="KW-1161">Viral attachment to host cell</keyword>
<keyword id="KW-0899">Viral immunoevasion</keyword>
<keyword id="KW-1182">Viral ion channel</keyword>
<keyword id="KW-1162">Viral penetration into host cytoplasm</keyword>
<keyword id="KW-0693">Viral RNA replication</keyword>
<keyword id="KW-0946">Virion</keyword>
<keyword id="KW-1164">Virus endocytosis by host</keyword>
<keyword id="KW-1160">Virus entry into host cell</keyword>
<keyword id="KW-0862">Zinc</keyword>
<keyword id="KW-0863">Zinc-finger</keyword>
<accession>P21404</accession>
<organism>
    <name type="scientific">Coxsackievirus A9 (strain Griggs)</name>
    <dbReference type="NCBI Taxonomy" id="12068"/>
    <lineage>
        <taxon>Viruses</taxon>
        <taxon>Riboviria</taxon>
        <taxon>Orthornavirae</taxon>
        <taxon>Pisuviricota</taxon>
        <taxon>Pisoniviricetes</taxon>
        <taxon>Picornavirales</taxon>
        <taxon>Picornaviridae</taxon>
        <taxon>Ensavirinae</taxon>
        <taxon>Enterovirus</taxon>
        <taxon>Enterovirus B</taxon>
    </lineage>
</organism>
<dbReference type="EC" id="3.4.22.29" evidence="2"/>
<dbReference type="EC" id="3.6.1.15" evidence="2"/>
<dbReference type="EC" id="3.4.22.28" evidence="12"/>
<dbReference type="EC" id="2.7.7.48" evidence="10"/>
<dbReference type="EMBL" id="D00627">
    <property type="protein sequence ID" value="BAA00518.1"/>
    <property type="molecule type" value="Genomic_RNA"/>
</dbReference>
<dbReference type="PIR" id="JQ0523">
    <property type="entry name" value="GNNYA9"/>
</dbReference>
<dbReference type="PDB" id="1D4M">
    <property type="method" value="X-ray"/>
    <property type="resolution" value="2.90 A"/>
    <property type="chains" value="1=569-867, 2=70-330, 3=331-568, 4=2-69"/>
</dbReference>
<dbReference type="PDB" id="3J2J">
    <property type="method" value="EM"/>
    <property type="resolution" value="9.54 A"/>
    <property type="chains" value="A=631-852, B=331-568, C=79-330"/>
</dbReference>
<dbReference type="PDBsum" id="1D4M"/>
<dbReference type="PDBsum" id="3J2J"/>
<dbReference type="EMDB" id="EMD-15634"/>
<dbReference type="EMDB" id="EMD-15692"/>
<dbReference type="EMDB" id="EMD-15706"/>
<dbReference type="EMDB" id="EMD-19774"/>
<dbReference type="EMDB" id="EMD-50039"/>
<dbReference type="EMDB" id="EMD-50269"/>
<dbReference type="EMDB" id="EMD-50324"/>
<dbReference type="EMDB" id="EMD-50414"/>
<dbReference type="EMDB" id="EMD-50614"/>
<dbReference type="EMDB" id="EMD-50617"/>
<dbReference type="EMDB" id="EMD-50636"/>
<dbReference type="SMR" id="P21404"/>
<dbReference type="ELM" id="P21404"/>
<dbReference type="DrugBank" id="DB08726">
    <property type="generic name" value="5-(7-(4-(4,5-dihydro-2-oxazolyl)phenoxy)heptyl)-3-methyl isoxazole"/>
</dbReference>
<dbReference type="DrugBank" id="DB08231">
    <property type="generic name" value="Myristic acid"/>
</dbReference>
<dbReference type="MEROPS" id="C03.011"/>
<dbReference type="MEROPS" id="C03.020"/>
<dbReference type="MEROPS" id="N08.001"/>
<dbReference type="EvolutionaryTrace" id="P21404"/>
<dbReference type="Proteomes" id="UP000000288">
    <property type="component" value="Segment"/>
</dbReference>
<dbReference type="GO" id="GO:0044162">
    <property type="term" value="C:host cell cytoplasmic vesicle membrane"/>
    <property type="evidence" value="ECO:0007669"/>
    <property type="project" value="UniProtKB-SubCell"/>
</dbReference>
<dbReference type="GO" id="GO:0042025">
    <property type="term" value="C:host cell nucleus"/>
    <property type="evidence" value="ECO:0007669"/>
    <property type="project" value="UniProtKB-SubCell"/>
</dbReference>
<dbReference type="GO" id="GO:0016020">
    <property type="term" value="C:membrane"/>
    <property type="evidence" value="ECO:0007669"/>
    <property type="project" value="UniProtKB-KW"/>
</dbReference>
<dbReference type="GO" id="GO:0039618">
    <property type="term" value="C:T=pseudo3 icosahedral viral capsid"/>
    <property type="evidence" value="ECO:0007669"/>
    <property type="project" value="UniProtKB-KW"/>
</dbReference>
<dbReference type="GO" id="GO:0005524">
    <property type="term" value="F:ATP binding"/>
    <property type="evidence" value="ECO:0007669"/>
    <property type="project" value="UniProtKB-KW"/>
</dbReference>
<dbReference type="GO" id="GO:0016887">
    <property type="term" value="F:ATP hydrolysis activity"/>
    <property type="evidence" value="ECO:0007669"/>
    <property type="project" value="InterPro"/>
</dbReference>
<dbReference type="GO" id="GO:0015267">
    <property type="term" value="F:channel activity"/>
    <property type="evidence" value="ECO:0007669"/>
    <property type="project" value="UniProtKB-KW"/>
</dbReference>
<dbReference type="GO" id="GO:0004197">
    <property type="term" value="F:cysteine-type endopeptidase activity"/>
    <property type="evidence" value="ECO:0007669"/>
    <property type="project" value="UniProtKB-EC"/>
</dbReference>
<dbReference type="GO" id="GO:0003723">
    <property type="term" value="F:RNA binding"/>
    <property type="evidence" value="ECO:0007669"/>
    <property type="project" value="UniProtKB-KW"/>
</dbReference>
<dbReference type="GO" id="GO:0003724">
    <property type="term" value="F:RNA helicase activity"/>
    <property type="evidence" value="ECO:0007669"/>
    <property type="project" value="InterPro"/>
</dbReference>
<dbReference type="GO" id="GO:0003968">
    <property type="term" value="F:RNA-directed RNA polymerase activity"/>
    <property type="evidence" value="ECO:0007669"/>
    <property type="project" value="UniProtKB-KW"/>
</dbReference>
<dbReference type="GO" id="GO:0005198">
    <property type="term" value="F:structural molecule activity"/>
    <property type="evidence" value="ECO:0007669"/>
    <property type="project" value="InterPro"/>
</dbReference>
<dbReference type="GO" id="GO:0008270">
    <property type="term" value="F:zinc ion binding"/>
    <property type="evidence" value="ECO:0007669"/>
    <property type="project" value="UniProtKB-KW"/>
</dbReference>
<dbReference type="GO" id="GO:0006260">
    <property type="term" value="P:DNA replication"/>
    <property type="evidence" value="ECO:0007669"/>
    <property type="project" value="UniProtKB-KW"/>
</dbReference>
<dbReference type="GO" id="GO:0006351">
    <property type="term" value="P:DNA-templated transcription"/>
    <property type="evidence" value="ECO:0007669"/>
    <property type="project" value="InterPro"/>
</dbReference>
<dbReference type="GO" id="GO:0075509">
    <property type="term" value="P:endocytosis involved in viral entry into host cell"/>
    <property type="evidence" value="ECO:0007669"/>
    <property type="project" value="UniProtKB-KW"/>
</dbReference>
<dbReference type="GO" id="GO:0034220">
    <property type="term" value="P:monoatomic ion transmembrane transport"/>
    <property type="evidence" value="ECO:0007669"/>
    <property type="project" value="UniProtKB-KW"/>
</dbReference>
<dbReference type="GO" id="GO:0006508">
    <property type="term" value="P:proteolysis"/>
    <property type="evidence" value="ECO:0007669"/>
    <property type="project" value="UniProtKB-KW"/>
</dbReference>
<dbReference type="GO" id="GO:0044694">
    <property type="term" value="P:symbiont genome entry into host cell via pore formation in plasma membrane"/>
    <property type="evidence" value="ECO:0007669"/>
    <property type="project" value="UniProtKB-KW"/>
</dbReference>
<dbReference type="GO" id="GO:0039520">
    <property type="term" value="P:symbiont-mediated activation of host autophagy"/>
    <property type="evidence" value="ECO:0000250"/>
    <property type="project" value="UniProtKB"/>
</dbReference>
<dbReference type="GO" id="GO:0039540">
    <property type="term" value="P:symbiont-mediated suppression of host cytoplasmic pattern recognition receptor signaling pathway via inhibition of RIG-I activity"/>
    <property type="evidence" value="ECO:0007669"/>
    <property type="project" value="UniProtKB-KW"/>
</dbReference>
<dbReference type="GO" id="GO:0039522">
    <property type="term" value="P:symbiont-mediated suppression of host mRNA export from nucleus"/>
    <property type="evidence" value="ECO:0007669"/>
    <property type="project" value="UniProtKB-KW"/>
</dbReference>
<dbReference type="GO" id="GO:0039694">
    <property type="term" value="P:viral RNA genome replication"/>
    <property type="evidence" value="ECO:0007669"/>
    <property type="project" value="InterPro"/>
</dbReference>
<dbReference type="GO" id="GO:0019062">
    <property type="term" value="P:virion attachment to host cell"/>
    <property type="evidence" value="ECO:0007669"/>
    <property type="project" value="UniProtKB-KW"/>
</dbReference>
<dbReference type="CDD" id="cd23213">
    <property type="entry name" value="Enterovirus_RdRp"/>
    <property type="match status" value="1"/>
</dbReference>
<dbReference type="CDD" id="cd00205">
    <property type="entry name" value="rhv_like"/>
    <property type="match status" value="3"/>
</dbReference>
<dbReference type="FunFam" id="1.20.960.20:FF:000001">
    <property type="entry name" value="Genome polyprotein"/>
    <property type="match status" value="1"/>
</dbReference>
<dbReference type="FunFam" id="2.40.10.10:FF:000018">
    <property type="entry name" value="Genome polyprotein"/>
    <property type="match status" value="1"/>
</dbReference>
<dbReference type="FunFam" id="2.40.10.10:FF:000020">
    <property type="entry name" value="Genome polyprotein"/>
    <property type="match status" value="1"/>
</dbReference>
<dbReference type="FunFam" id="2.40.10.10:FF:000022">
    <property type="entry name" value="Genome polyprotein"/>
    <property type="match status" value="1"/>
</dbReference>
<dbReference type="FunFam" id="2.60.120.20:FF:000001">
    <property type="entry name" value="Genome polyprotein"/>
    <property type="match status" value="1"/>
</dbReference>
<dbReference type="FunFam" id="2.60.120.20:FF:000002">
    <property type="entry name" value="Genome polyprotein"/>
    <property type="match status" value="1"/>
</dbReference>
<dbReference type="FunFam" id="2.60.120.20:FF:000004">
    <property type="entry name" value="Genome polyprotein"/>
    <property type="match status" value="1"/>
</dbReference>
<dbReference type="FunFam" id="3.30.70.270:FF:000008">
    <property type="entry name" value="Genome polyprotein"/>
    <property type="match status" value="1"/>
</dbReference>
<dbReference type="FunFam" id="4.10.80.10:FF:000001">
    <property type="entry name" value="Genome polyprotein"/>
    <property type="match status" value="1"/>
</dbReference>
<dbReference type="FunFam" id="4.10.880.10:FF:000001">
    <property type="entry name" value="Genome polyprotein"/>
    <property type="match status" value="1"/>
</dbReference>
<dbReference type="FunFam" id="4.10.880.10:FF:000002">
    <property type="entry name" value="Genome polyprotein"/>
    <property type="match status" value="1"/>
</dbReference>
<dbReference type="Gene3D" id="1.20.960.20">
    <property type="match status" value="1"/>
</dbReference>
<dbReference type="Gene3D" id="2.60.120.20">
    <property type="match status" value="3"/>
</dbReference>
<dbReference type="Gene3D" id="3.30.70.270">
    <property type="match status" value="1"/>
</dbReference>
<dbReference type="Gene3D" id="4.10.80.10">
    <property type="entry name" value="Picornavirus coat protein VP4"/>
    <property type="match status" value="1"/>
</dbReference>
<dbReference type="Gene3D" id="6.10.20.20">
    <property type="entry name" value="Poliovirus 3A protein-like"/>
    <property type="match status" value="1"/>
</dbReference>
<dbReference type="Gene3D" id="4.10.880.10">
    <property type="entry name" value="Poliovirus 3D polymerase Domain 1 (Nucleotidyltransferase)"/>
    <property type="match status" value="2"/>
</dbReference>
<dbReference type="Gene3D" id="2.40.10.10">
    <property type="entry name" value="Trypsin-like serine proteases"/>
    <property type="match status" value="4"/>
</dbReference>
<dbReference type="InterPro" id="IPR003593">
    <property type="entry name" value="AAA+_ATPase"/>
</dbReference>
<dbReference type="InterPro" id="IPR043502">
    <property type="entry name" value="DNA/RNA_pol_sf"/>
</dbReference>
<dbReference type="InterPro" id="IPR000605">
    <property type="entry name" value="Helicase_SF3_ssDNA/RNA_vir"/>
</dbReference>
<dbReference type="InterPro" id="IPR014759">
    <property type="entry name" value="Helicase_SF3_ssRNA_vir"/>
</dbReference>
<dbReference type="InterPro" id="IPR027417">
    <property type="entry name" value="P-loop_NTPase"/>
</dbReference>
<dbReference type="InterPro" id="IPR014838">
    <property type="entry name" value="P3A"/>
</dbReference>
<dbReference type="InterPro" id="IPR036203">
    <property type="entry name" value="P3A_soluble_dom"/>
</dbReference>
<dbReference type="InterPro" id="IPR044067">
    <property type="entry name" value="PCV_3C_PRO"/>
</dbReference>
<dbReference type="InterPro" id="IPR000081">
    <property type="entry name" value="Peptidase_C3"/>
</dbReference>
<dbReference type="InterPro" id="IPR000199">
    <property type="entry name" value="Peptidase_C3A/C3B_picornavir"/>
</dbReference>
<dbReference type="InterPro" id="IPR009003">
    <property type="entry name" value="Peptidase_S1_PA"/>
</dbReference>
<dbReference type="InterPro" id="IPR043504">
    <property type="entry name" value="Peptidase_S1_PA_chymotrypsin"/>
</dbReference>
<dbReference type="InterPro" id="IPR003138">
    <property type="entry name" value="Pico_P1A"/>
</dbReference>
<dbReference type="InterPro" id="IPR036988">
    <property type="entry name" value="Pico_P1A_sf"/>
</dbReference>
<dbReference type="InterPro" id="IPR002527">
    <property type="entry name" value="Pico_P2B"/>
</dbReference>
<dbReference type="InterPro" id="IPR001676">
    <property type="entry name" value="Picornavirus_capsid"/>
</dbReference>
<dbReference type="InterPro" id="IPR043128">
    <property type="entry name" value="Rev_trsase/Diguanyl_cyclase"/>
</dbReference>
<dbReference type="InterPro" id="IPR033703">
    <property type="entry name" value="Rhv-like"/>
</dbReference>
<dbReference type="InterPro" id="IPR001205">
    <property type="entry name" value="RNA-dir_pol_C"/>
</dbReference>
<dbReference type="InterPro" id="IPR007094">
    <property type="entry name" value="RNA-dir_pol_PSvirus"/>
</dbReference>
<dbReference type="InterPro" id="IPR029053">
    <property type="entry name" value="Viral_coat"/>
</dbReference>
<dbReference type="Pfam" id="PF08727">
    <property type="entry name" value="P3A"/>
    <property type="match status" value="1"/>
</dbReference>
<dbReference type="Pfam" id="PF00548">
    <property type="entry name" value="Peptidase_C3"/>
    <property type="match status" value="1"/>
</dbReference>
<dbReference type="Pfam" id="PF02226">
    <property type="entry name" value="Pico_P1A"/>
    <property type="match status" value="1"/>
</dbReference>
<dbReference type="Pfam" id="PF00947">
    <property type="entry name" value="Pico_P2A"/>
    <property type="match status" value="1"/>
</dbReference>
<dbReference type="Pfam" id="PF01552">
    <property type="entry name" value="Pico_P2B"/>
    <property type="match status" value="1"/>
</dbReference>
<dbReference type="Pfam" id="PF00680">
    <property type="entry name" value="RdRP_1"/>
    <property type="match status" value="1"/>
</dbReference>
<dbReference type="Pfam" id="PF00073">
    <property type="entry name" value="Rhv"/>
    <property type="match status" value="3"/>
</dbReference>
<dbReference type="Pfam" id="PF00910">
    <property type="entry name" value="RNA_helicase"/>
    <property type="match status" value="1"/>
</dbReference>
<dbReference type="SMART" id="SM00382">
    <property type="entry name" value="AAA"/>
    <property type="match status" value="1"/>
</dbReference>
<dbReference type="SUPFAM" id="SSF56672">
    <property type="entry name" value="DNA/RNA polymerases"/>
    <property type="match status" value="1"/>
</dbReference>
<dbReference type="SUPFAM" id="SSF52540">
    <property type="entry name" value="P-loop containing nucleoside triphosphate hydrolases"/>
    <property type="match status" value="1"/>
</dbReference>
<dbReference type="SUPFAM" id="SSF88633">
    <property type="entry name" value="Positive stranded ssRNA viruses"/>
    <property type="match status" value="2"/>
</dbReference>
<dbReference type="SUPFAM" id="SSF89043">
    <property type="entry name" value="Soluble domain of poliovirus core protein 3a"/>
    <property type="match status" value="1"/>
</dbReference>
<dbReference type="SUPFAM" id="SSF50494">
    <property type="entry name" value="Trypsin-like serine proteases"/>
    <property type="match status" value="2"/>
</dbReference>
<dbReference type="PROSITE" id="PS51874">
    <property type="entry name" value="PCV_3C_PRO"/>
    <property type="match status" value="1"/>
</dbReference>
<dbReference type="PROSITE" id="PS50507">
    <property type="entry name" value="RDRP_SSRNA_POS"/>
    <property type="match status" value="1"/>
</dbReference>
<dbReference type="PROSITE" id="PS51218">
    <property type="entry name" value="SF3_HELICASE_2"/>
    <property type="match status" value="1"/>
</dbReference>
<evidence type="ECO:0000250" key="1">
    <source>
        <dbReference type="UniProtKB" id="B9VUU3"/>
    </source>
</evidence>
<evidence type="ECO:0000250" key="2">
    <source>
        <dbReference type="UniProtKB" id="P03300"/>
    </source>
</evidence>
<evidence type="ECO:0000250" key="3">
    <source>
        <dbReference type="UniProtKB" id="P03301"/>
    </source>
</evidence>
<evidence type="ECO:0000250" key="4">
    <source>
        <dbReference type="UniProtKB" id="P03303"/>
    </source>
</evidence>
<evidence type="ECO:0000250" key="5">
    <source>
        <dbReference type="UniProtKB" id="P03313"/>
    </source>
</evidence>
<evidence type="ECO:0000250" key="6">
    <source>
        <dbReference type="UniProtKB" id="P04936"/>
    </source>
</evidence>
<evidence type="ECO:0000250" key="7">
    <source>
        <dbReference type="UniProtKB" id="Q66478"/>
    </source>
</evidence>
<evidence type="ECO:0000250" key="8">
    <source>
        <dbReference type="UniProtKB" id="Q9QF31"/>
    </source>
</evidence>
<evidence type="ECO:0000255" key="9"/>
<evidence type="ECO:0000255" key="10">
    <source>
        <dbReference type="PROSITE-ProRule" id="PRU00539"/>
    </source>
</evidence>
<evidence type="ECO:0000255" key="11">
    <source>
        <dbReference type="PROSITE-ProRule" id="PRU00551"/>
    </source>
</evidence>
<evidence type="ECO:0000255" key="12">
    <source>
        <dbReference type="PROSITE-ProRule" id="PRU01222"/>
    </source>
</evidence>
<evidence type="ECO:0000269" key="13">
    <source>
    </source>
</evidence>
<evidence type="ECO:0000305" key="14"/>
<evidence type="ECO:0000305" key="15">
    <source>
    </source>
</evidence>
<evidence type="ECO:0007829" key="16">
    <source>
        <dbReference type="PDB" id="1D4M"/>
    </source>
</evidence>
<protein>
    <recommendedName>
        <fullName>Genome polyprotein</fullName>
    </recommendedName>
    <component>
        <recommendedName>
            <fullName>P1</fullName>
        </recommendedName>
    </component>
    <component>
        <recommendedName>
            <fullName>Capsid protein VP0</fullName>
        </recommendedName>
        <alternativeName>
            <fullName>VP4-VP2</fullName>
        </alternativeName>
    </component>
    <component>
        <recommendedName>
            <fullName>Capsid protein VP4</fullName>
        </recommendedName>
        <alternativeName>
            <fullName>P1A</fullName>
        </alternativeName>
        <alternativeName>
            <fullName>Virion protein 4</fullName>
        </alternativeName>
    </component>
    <component>
        <recommendedName>
            <fullName>Capsid protein VP2</fullName>
        </recommendedName>
        <alternativeName>
            <fullName>P1B</fullName>
        </alternativeName>
        <alternativeName>
            <fullName>Virion protein 2</fullName>
        </alternativeName>
    </component>
    <component>
        <recommendedName>
            <fullName>Capsid protein VP3</fullName>
        </recommendedName>
        <alternativeName>
            <fullName>P1C</fullName>
        </alternativeName>
        <alternativeName>
            <fullName>Virion protein 3</fullName>
        </alternativeName>
    </component>
    <component>
        <recommendedName>
            <fullName>Capsid protein VP1</fullName>
        </recommendedName>
        <alternativeName>
            <fullName>P1D</fullName>
        </alternativeName>
        <alternativeName>
            <fullName>Virion protein 1</fullName>
        </alternativeName>
    </component>
    <component>
        <recommendedName>
            <fullName>P2</fullName>
        </recommendedName>
    </component>
    <component>
        <recommendedName>
            <fullName>Protease 2A</fullName>
            <shortName>P2A</shortName>
            <ecNumber evidence="2">3.4.22.29</ecNumber>
        </recommendedName>
        <alternativeName>
            <fullName>Picornain 2A</fullName>
        </alternativeName>
        <alternativeName>
            <fullName>Protein 2A</fullName>
        </alternativeName>
    </component>
    <component>
        <recommendedName>
            <fullName>Protein 2B</fullName>
            <shortName>P2B</shortName>
        </recommendedName>
    </component>
    <component>
        <recommendedName>
            <fullName>Protein 2C</fullName>
            <shortName>P2C</shortName>
            <ecNumber evidence="2">3.6.1.15</ecNumber>
        </recommendedName>
    </component>
    <component>
        <recommendedName>
            <fullName>P3</fullName>
        </recommendedName>
    </component>
    <component>
        <recommendedName>
            <fullName>Protein 3AB</fullName>
        </recommendedName>
    </component>
    <component>
        <recommendedName>
            <fullName>Protein 3A</fullName>
            <shortName>P3A</shortName>
        </recommendedName>
    </component>
    <component>
        <recommendedName>
            <fullName>Viral protein genome-linked</fullName>
            <shortName>VPg</shortName>
        </recommendedName>
        <alternativeName>
            <fullName>Protein 3B</fullName>
            <shortName>P3B</shortName>
        </alternativeName>
    </component>
    <component>
        <recommendedName>
            <fullName>Protein 3CD</fullName>
            <ecNumber>3.4.22.28</ecNumber>
        </recommendedName>
    </component>
    <component>
        <recommendedName>
            <fullName evidence="12">Protease 3C</fullName>
            <ecNumber evidence="12">3.4.22.28</ecNumber>
        </recommendedName>
        <alternativeName>
            <fullName evidence="12">Picornain 3C</fullName>
            <shortName evidence="12">P3C</shortName>
        </alternativeName>
    </component>
    <component>
        <recommendedName>
            <fullName evidence="10">RNA-directed RNA polymerase</fullName>
            <shortName>RdRp</shortName>
            <ecNumber evidence="10">2.7.7.48</ecNumber>
        </recommendedName>
        <alternativeName>
            <fullName>3D polymerase</fullName>
            <shortName>3Dpol</shortName>
        </alternativeName>
        <alternativeName>
            <fullName>Protein 3D</fullName>
            <shortName>3D</shortName>
        </alternativeName>
    </component>
</protein>
<proteinExistence type="evidence at protein level"/>
<organismHost>
    <name type="scientific">Homo sapiens</name>
    <name type="common">Human</name>
    <dbReference type="NCBI Taxonomy" id="9606"/>
</organismHost>
<reference key="1">
    <citation type="journal article" date="1989" name="J. Gen. Virol.">
        <title>The nucleotide sequence of coxsackievirus A9; implications for receptor binding and enterovirus classification.</title>
        <authorList>
            <person name="Chang K.H."/>
            <person name="Auvinen P."/>
            <person name="Hyypiae T."/>
            <person name="Stanway G."/>
        </authorList>
    </citation>
    <scope>NUCLEOTIDE SEQUENCE [GENOMIC RNA]</scope>
</reference>
<reference key="2">
    <citation type="journal article" date="2004" name="J. Virol.">
        <title>Integrin alpha v beta 6 is an RGD-dependent receptor for coxsackievirus A9.</title>
        <authorList>
            <person name="Williams C.H."/>
            <person name="Kajander T."/>
            <person name="Hyypia T."/>
            <person name="Jackson T."/>
            <person name="Sheppard D."/>
            <person name="Stanway G."/>
        </authorList>
    </citation>
    <scope>INTERACTION WITH HOST ITGAV/ITGB6 INTEGRIN (CAPSID PROTEIN VP1)</scope>
</reference>
<reference key="3">
    <citation type="journal article" date="1999" name="Structure">
        <title>The crystal structure of coxsackievirus A9: new insights into the uncoating mechanisms of enteroviruses.</title>
        <authorList>
            <person name="Hendry E."/>
            <person name="Hatanaka H."/>
            <person name="Fry E."/>
            <person name="Smyth M."/>
            <person name="Tate J."/>
            <person name="Stanway G."/>
            <person name="Santti J."/>
            <person name="Maaronen M."/>
            <person name="Hyypia T."/>
            <person name="Stuart D."/>
        </authorList>
    </citation>
    <scope>X-RAY CRYSTALLOGRAPHY (2.9 ANGSTROMS) OF 1-870</scope>
</reference>